<dbReference type="EMBL" id="AY230828">
    <property type="protein sequence ID" value="AAP86655.1"/>
    <property type="molecule type" value="mRNA"/>
</dbReference>
<dbReference type="EMBL" id="AC007048">
    <property type="protein sequence ID" value="AAD21708.2"/>
    <property type="molecule type" value="Genomic_DNA"/>
</dbReference>
<dbReference type="EMBL" id="CP002685">
    <property type="protein sequence ID" value="AEC07032.1"/>
    <property type="molecule type" value="Genomic_DNA"/>
</dbReference>
<dbReference type="EMBL" id="AF360216">
    <property type="protein sequence ID" value="AAK25926.1"/>
    <property type="molecule type" value="mRNA"/>
</dbReference>
<dbReference type="EMBL" id="AY040061">
    <property type="protein sequence ID" value="AAK64119.1"/>
    <property type="molecule type" value="mRNA"/>
</dbReference>
<dbReference type="EMBL" id="AK220903">
    <property type="protein sequence ID" value="BAD94334.1"/>
    <property type="status" value="ALT_INIT"/>
    <property type="molecule type" value="mRNA"/>
</dbReference>
<dbReference type="PIR" id="A84591">
    <property type="entry name" value="A84591"/>
</dbReference>
<dbReference type="RefSeq" id="NP_565477.1">
    <property type="nucleotide sequence ID" value="NM_127618.4"/>
</dbReference>
<dbReference type="SMR" id="Q9SIV2"/>
<dbReference type="BioGRID" id="1933">
    <property type="interactions" value="147"/>
</dbReference>
<dbReference type="FunCoup" id="Q9SIV2">
    <property type="interactions" value="5052"/>
</dbReference>
<dbReference type="IntAct" id="Q9SIV2">
    <property type="interactions" value="28"/>
</dbReference>
<dbReference type="STRING" id="3702.Q9SIV2"/>
<dbReference type="iPTMnet" id="Q9SIV2"/>
<dbReference type="MetOSite" id="Q9SIV2"/>
<dbReference type="SwissPalm" id="Q9SIV2"/>
<dbReference type="PaxDb" id="3702-AT2G20580.1"/>
<dbReference type="ProteomicsDB" id="225998"/>
<dbReference type="EnsemblPlants" id="AT2G20580.1">
    <property type="protein sequence ID" value="AT2G20580.1"/>
    <property type="gene ID" value="AT2G20580"/>
</dbReference>
<dbReference type="GeneID" id="816580"/>
<dbReference type="Gramene" id="AT2G20580.1">
    <property type="protein sequence ID" value="AT2G20580.1"/>
    <property type="gene ID" value="AT2G20580"/>
</dbReference>
<dbReference type="KEGG" id="ath:AT2G20580"/>
<dbReference type="Araport" id="AT2G20580"/>
<dbReference type="TAIR" id="AT2G20580">
    <property type="gene designation" value="RPN1A"/>
</dbReference>
<dbReference type="eggNOG" id="KOG2005">
    <property type="taxonomic scope" value="Eukaryota"/>
</dbReference>
<dbReference type="HOGENOM" id="CLU_008705_1_0_1"/>
<dbReference type="InParanoid" id="Q9SIV2"/>
<dbReference type="OMA" id="GTCNGDI"/>
<dbReference type="OrthoDB" id="10252509at2759"/>
<dbReference type="PhylomeDB" id="Q9SIV2"/>
<dbReference type="CD-CODE" id="4299E36E">
    <property type="entry name" value="Nucleolus"/>
</dbReference>
<dbReference type="PRO" id="PR:Q9SIV2"/>
<dbReference type="Proteomes" id="UP000006548">
    <property type="component" value="Chromosome 2"/>
</dbReference>
<dbReference type="ExpressionAtlas" id="Q9SIV2">
    <property type="expression patterns" value="baseline and differential"/>
</dbReference>
<dbReference type="GO" id="GO:0005737">
    <property type="term" value="C:cytoplasm"/>
    <property type="evidence" value="ECO:0000314"/>
    <property type="project" value="UniProtKB"/>
</dbReference>
<dbReference type="GO" id="GO:0005829">
    <property type="term" value="C:cytosol"/>
    <property type="evidence" value="ECO:0007005"/>
    <property type="project" value="TAIR"/>
</dbReference>
<dbReference type="GO" id="GO:0005739">
    <property type="term" value="C:mitochondrion"/>
    <property type="evidence" value="ECO:0007005"/>
    <property type="project" value="TAIR"/>
</dbReference>
<dbReference type="GO" id="GO:0005634">
    <property type="term" value="C:nucleus"/>
    <property type="evidence" value="ECO:0000314"/>
    <property type="project" value="UniProtKB"/>
</dbReference>
<dbReference type="GO" id="GO:0009506">
    <property type="term" value="C:plasmodesma"/>
    <property type="evidence" value="ECO:0007005"/>
    <property type="project" value="TAIR"/>
</dbReference>
<dbReference type="GO" id="GO:0000502">
    <property type="term" value="C:proteasome complex"/>
    <property type="evidence" value="ECO:0000314"/>
    <property type="project" value="TAIR"/>
</dbReference>
<dbReference type="GO" id="GO:0030234">
    <property type="term" value="F:enzyme regulator activity"/>
    <property type="evidence" value="ECO:0007669"/>
    <property type="project" value="InterPro"/>
</dbReference>
<dbReference type="GO" id="GO:0043130">
    <property type="term" value="F:ubiquitin binding"/>
    <property type="evidence" value="ECO:0000314"/>
    <property type="project" value="UniProtKB"/>
</dbReference>
<dbReference type="GO" id="GO:0045087">
    <property type="term" value="P:innate immune response"/>
    <property type="evidence" value="ECO:0000315"/>
    <property type="project" value="UniProtKB"/>
</dbReference>
<dbReference type="GO" id="GO:0030163">
    <property type="term" value="P:protein catabolic process"/>
    <property type="evidence" value="ECO:0000304"/>
    <property type="project" value="TAIR"/>
</dbReference>
<dbReference type="GO" id="GO:0051726">
    <property type="term" value="P:regulation of cell cycle"/>
    <property type="evidence" value="ECO:0000315"/>
    <property type="project" value="TAIR"/>
</dbReference>
<dbReference type="GO" id="GO:0042176">
    <property type="term" value="P:regulation of protein catabolic process"/>
    <property type="evidence" value="ECO:0007669"/>
    <property type="project" value="InterPro"/>
</dbReference>
<dbReference type="GO" id="GO:0009751">
    <property type="term" value="P:response to salicylic acid"/>
    <property type="evidence" value="ECO:0000270"/>
    <property type="project" value="UniProtKB"/>
</dbReference>
<dbReference type="FunFam" id="1.25.10.10:FF:000084">
    <property type="entry name" value="26S proteasome non-ATPase regulatory subunit 2 homolog"/>
    <property type="match status" value="1"/>
</dbReference>
<dbReference type="Gene3D" id="1.25.10.10">
    <property type="entry name" value="Leucine-rich Repeat Variant"/>
    <property type="match status" value="1"/>
</dbReference>
<dbReference type="InterPro" id="IPR016643">
    <property type="entry name" value="26S_Psome_Rpn1"/>
</dbReference>
<dbReference type="InterPro" id="IPR011989">
    <property type="entry name" value="ARM-like"/>
</dbReference>
<dbReference type="InterPro" id="IPR016024">
    <property type="entry name" value="ARM-type_fold"/>
</dbReference>
<dbReference type="InterPro" id="IPR002015">
    <property type="entry name" value="Proteasome/cyclosome_rpt"/>
</dbReference>
<dbReference type="InterPro" id="IPR041433">
    <property type="entry name" value="RPN1_C"/>
</dbReference>
<dbReference type="InterPro" id="IPR040892">
    <property type="entry name" value="RPN1_N"/>
</dbReference>
<dbReference type="PANTHER" id="PTHR10943">
    <property type="entry name" value="26S PROTEASOME NON-ATPASE REGULATORY SUBUNIT"/>
    <property type="match status" value="1"/>
</dbReference>
<dbReference type="PANTHER" id="PTHR10943:SF1">
    <property type="entry name" value="26S PROTEASOME NON-ATPASE REGULATORY SUBUNIT 2"/>
    <property type="match status" value="1"/>
</dbReference>
<dbReference type="Pfam" id="PF01851">
    <property type="entry name" value="PC_rep"/>
    <property type="match status" value="3"/>
</dbReference>
<dbReference type="Pfam" id="PF18051">
    <property type="entry name" value="RPN1_C"/>
    <property type="match status" value="1"/>
</dbReference>
<dbReference type="Pfam" id="PF17781">
    <property type="entry name" value="RPN1_RPN2_N"/>
    <property type="match status" value="1"/>
</dbReference>
<dbReference type="PIRSF" id="PIRSF015965">
    <property type="entry name" value="26S_Psome_Rpn1"/>
    <property type="match status" value="1"/>
</dbReference>
<dbReference type="SUPFAM" id="SSF48371">
    <property type="entry name" value="ARM repeat"/>
    <property type="match status" value="1"/>
</dbReference>
<name>PSD2A_ARATH</name>
<evidence type="ECO:0000250" key="1"/>
<evidence type="ECO:0000255" key="2"/>
<evidence type="ECO:0000255" key="3">
    <source>
        <dbReference type="PROSITE-ProRule" id="PRU00768"/>
    </source>
</evidence>
<evidence type="ECO:0000256" key="4">
    <source>
        <dbReference type="SAM" id="MobiDB-lite"/>
    </source>
</evidence>
<evidence type="ECO:0000269" key="5">
    <source>
    </source>
</evidence>
<evidence type="ECO:0000269" key="6">
    <source>
    </source>
</evidence>
<evidence type="ECO:0000269" key="7">
    <source>
    </source>
</evidence>
<evidence type="ECO:0000269" key="8">
    <source>
    </source>
</evidence>
<evidence type="ECO:0000269" key="9">
    <source>
    </source>
</evidence>
<evidence type="ECO:0000269" key="10">
    <source>
    </source>
</evidence>
<evidence type="ECO:0000303" key="11">
    <source>
    </source>
</evidence>
<evidence type="ECO:0000305" key="12"/>
<evidence type="ECO:0000305" key="13">
    <source>
    </source>
</evidence>
<evidence type="ECO:0000305" key="14">
    <source>
    </source>
</evidence>
<evidence type="ECO:0000312" key="15">
    <source>
        <dbReference type="Araport" id="AT2G20580"/>
    </source>
</evidence>
<evidence type="ECO:0000312" key="16">
    <source>
        <dbReference type="EMBL" id="AAD21708.2"/>
    </source>
</evidence>
<proteinExistence type="evidence at protein level"/>
<comment type="function">
    <text evidence="1 6 7 9 10">Acts as a regulatory subunit of the 26 proteasome which is involved in the ATP-dependent degradation of ubiquitinated proteins (By similarity). Required during embryogenesis (PubMed:16169895). Required for optimal plant growth and stress responses (PubMed:19605416). Required for innate immunity (PubMed:22577987). Prevents JMJ27 accumulation in non-drought conditions (PubMed:34197643).</text>
</comment>
<comment type="subunit">
    <text evidence="5 8 10">Component of the 19S regulatory particle (RP/PA700) base subcomplex of the 26S proteasome. The 26S proteasome is composed of a core protease (CP), known as the 20S proteasome, capped at one or both ends by the 19S regulatory particle (RP/PA700). The RP/PA700 complex is composed of at least 17 different subunits in two subcomplexes, the base and the lid, which form the portions proximal and distal to the 20S proteolytic core, respectively. Interacts with JMJ27 (PubMed:34197643).</text>
</comment>
<comment type="subcellular location">
    <subcellularLocation>
        <location evidence="3 9">Nucleus</location>
    </subcellularLocation>
    <subcellularLocation>
        <location evidence="9">Cytoplasm</location>
    </subcellularLocation>
</comment>
<comment type="tissue specificity">
    <text evidence="5 6">Expressed in stems, leaves, buds, flowers, siliques and developing seeds.</text>
</comment>
<comment type="developmental stage">
    <text evidence="6">Detected in the floral meristem and primordia of floral organs. During early stages of flower development, expressed in the whole floral meristem, especially in emerging primordia. Later present in developing carpels, particularly in emerging ovule primordia. After fertilization, observed in the embryo and the chalazal endosperm. High levels at the early embryogenesis stages that fade out later. Also present in the developing seed coat, the septum, and the silique wall. In the stamens, detected at high levels in the anthers. Observed in sporogenous cells and then in tetrads of microspores.</text>
</comment>
<comment type="induction">
    <text evidence="9 10">By salicylic acid (SA) (PubMed:22577987). Repressed by drought (PubMed:34197643).</text>
</comment>
<comment type="disruption phenotype">
    <text evidence="6 7 9">Embryo lethality due to development arrest at the globular stage with defects in the formation of the embryonic root, the protoderm, and procambium (PubMed:16169895). Increased cell sizes, anthocyanin accumulation, reduced growth rate, reduced fertility, decreased heat shock tolerance, increased oxidative stress tolerance (PubMed:19605416). Mutant displays enhanced susceptibility to the fungal pathogen G.cichoracearum and to virulent and avirulent bacterial Pto DC3000 strains, which indicated defects in basal defense and resistance (R) protein-mediated defense (PubMed:22577987).</text>
</comment>
<comment type="similarity">
    <text evidence="12">Belongs to the proteasome subunit S2 family.</text>
</comment>
<comment type="caution">
    <text evidence="13 14">The embryo lethal disruption phenotype (PubMed:16169895) could be confirmed (PubMed:19605416).</text>
</comment>
<comment type="sequence caution" evidence="12">
    <conflict type="erroneous initiation">
        <sequence resource="EMBL-CDS" id="BAD94334"/>
    </conflict>
    <text>Truncated N-terminus.</text>
</comment>
<accession>Q9SIV2</accession>
<accession>Q56ZR0</accession>
<accession>Q9C5J1</accession>
<sequence length="891" mass="98144">MAPTQDPNSVGGGAKKDEATLKVPSKDPKKKDEKKDEDLSEEDLELKQNLELYVERVQDPNPELQKAALESMRQEIRASTSSMTSVPKPLKFLRPHYGTLKAFHETMADSDLKKYLSDILSVLALTMSADGERESLRFRLIGTEGDIGSWGHEYVRNLAGEIAQEYTKRQSEEASIDDLMELVQQIVAFHMKHNAETEAVDLLMDVEDLDLLLEHVDKTNFKRTCNYLTSAARYLPGPDDMLVLDISYMIYMKFEEYPNALQIALFLDNTQYVKQVFTSCTDLLKKKQFCYMIARHGITFELDDEMVADDDDREALQDIVNNTKLSEGYLTLARDIEVMEAKTPEDIYKAHLLDGRASSGASVDSARQNLAATFVNAFVNAGFGQDKLMTVPSDSTTGSSGNWLFKNKEHGKTSAAASLGMIQLWDVDSGLSQLDKYFHSNDNPIIAGALLGVGIVNCGIKNDCDPALALLGDYIDKEDSSVRIGAIMGLGISYAGSQNDQIRNKLSPILNDAKAPLDVIAFASLSLGMIYVGSCNEEVAQSIIFALMDRSEAELGDALTRFLPLGLGLLYLGKQESVEATAEVSKTFNEKIRKYCDMTLLSCAYAGTGNVLKVQDLLAQCGEHLEKGDIHQGPAVLGLAMVAMSEELGVDMEIRSLERMLQYGEQNIRRAVPLALGLLCISNPKVTVMDTLSRLSHDTDSEVAMSAIISLGLIGAGTNNARIAGMLRNLSSYYYKDMSLLFCVRIAQGLVHMGKGLLTLSPFHSERFLLSPTALAGIVTLLHACLDMKPIILGKYHYVLYFLVLAMQPRMMLTVDENLKPLSVPVRVGQAVDVVGQAGRPKTITGFQTHSTPVLLAAGERAELATDKYIPLSPILEGFIILKENPDYREE</sequence>
<gene>
    <name evidence="11" type="primary">RPN1A</name>
    <name evidence="15" type="ordered locus">At2g20580</name>
    <name evidence="16" type="ORF">F23N11.10</name>
</gene>
<reference key="1">
    <citation type="journal article" date="2004" name="J. Biol. Chem.">
        <title>Purification of the Arabidopsis 26 S proteasome: biochemical and molecular analyses revealed the presence of multiple isoforms.</title>
        <authorList>
            <person name="Yang P."/>
            <person name="Fu H."/>
            <person name="Walker J."/>
            <person name="Papa C.M."/>
            <person name="Smalle J."/>
            <person name="Ju Y.-M."/>
            <person name="Vierstra R.D."/>
        </authorList>
    </citation>
    <scope>NUCLEOTIDE SEQUENCE [MRNA]</scope>
    <scope>SUBUNIT</scope>
    <scope>IDENTIFICATION BY MASS SPECTROMETRY</scope>
    <scope>TISSUE SPECIFICITY</scope>
    <source>
        <strain>cv. Columbia</strain>
    </source>
</reference>
<reference key="2">
    <citation type="journal article" date="1999" name="Nature">
        <title>Sequence and analysis of chromosome 2 of the plant Arabidopsis thaliana.</title>
        <authorList>
            <person name="Lin X."/>
            <person name="Kaul S."/>
            <person name="Rounsley S.D."/>
            <person name="Shea T.P."/>
            <person name="Benito M.-I."/>
            <person name="Town C.D."/>
            <person name="Fujii C.Y."/>
            <person name="Mason T.M."/>
            <person name="Bowman C.L."/>
            <person name="Barnstead M.E."/>
            <person name="Feldblyum T.V."/>
            <person name="Buell C.R."/>
            <person name="Ketchum K.A."/>
            <person name="Lee J.J."/>
            <person name="Ronning C.M."/>
            <person name="Koo H.L."/>
            <person name="Moffat K.S."/>
            <person name="Cronin L.A."/>
            <person name="Shen M."/>
            <person name="Pai G."/>
            <person name="Van Aken S."/>
            <person name="Umayam L."/>
            <person name="Tallon L.J."/>
            <person name="Gill J.E."/>
            <person name="Adams M.D."/>
            <person name="Carrera A.J."/>
            <person name="Creasy T.H."/>
            <person name="Goodman H.M."/>
            <person name="Somerville C.R."/>
            <person name="Copenhaver G.P."/>
            <person name="Preuss D."/>
            <person name="Nierman W.C."/>
            <person name="White O."/>
            <person name="Eisen J.A."/>
            <person name="Salzberg S.L."/>
            <person name="Fraser C.M."/>
            <person name="Venter J.C."/>
        </authorList>
    </citation>
    <scope>NUCLEOTIDE SEQUENCE [LARGE SCALE GENOMIC DNA]</scope>
    <source>
        <strain>cv. Columbia</strain>
    </source>
</reference>
<reference key="3">
    <citation type="journal article" date="2017" name="Plant J.">
        <title>Araport11: a complete reannotation of the Arabidopsis thaliana reference genome.</title>
        <authorList>
            <person name="Cheng C.Y."/>
            <person name="Krishnakumar V."/>
            <person name="Chan A.P."/>
            <person name="Thibaud-Nissen F."/>
            <person name="Schobel S."/>
            <person name="Town C.D."/>
        </authorList>
    </citation>
    <scope>GENOME REANNOTATION</scope>
    <source>
        <strain>cv. Columbia</strain>
    </source>
</reference>
<reference key="4">
    <citation type="journal article" date="2003" name="Science">
        <title>Empirical analysis of transcriptional activity in the Arabidopsis genome.</title>
        <authorList>
            <person name="Yamada K."/>
            <person name="Lim J."/>
            <person name="Dale J.M."/>
            <person name="Chen H."/>
            <person name="Shinn P."/>
            <person name="Palm C.J."/>
            <person name="Southwick A.M."/>
            <person name="Wu H.C."/>
            <person name="Kim C.J."/>
            <person name="Nguyen M."/>
            <person name="Pham P.K."/>
            <person name="Cheuk R.F."/>
            <person name="Karlin-Newmann G."/>
            <person name="Liu S.X."/>
            <person name="Lam B."/>
            <person name="Sakano H."/>
            <person name="Wu T."/>
            <person name="Yu G."/>
            <person name="Miranda M."/>
            <person name="Quach H.L."/>
            <person name="Tripp M."/>
            <person name="Chang C.H."/>
            <person name="Lee J.M."/>
            <person name="Toriumi M.J."/>
            <person name="Chan M.M."/>
            <person name="Tang C.C."/>
            <person name="Onodera C.S."/>
            <person name="Deng J.M."/>
            <person name="Akiyama K."/>
            <person name="Ansari Y."/>
            <person name="Arakawa T."/>
            <person name="Banh J."/>
            <person name="Banno F."/>
            <person name="Bowser L."/>
            <person name="Brooks S.Y."/>
            <person name="Carninci P."/>
            <person name="Chao Q."/>
            <person name="Choy N."/>
            <person name="Enju A."/>
            <person name="Goldsmith A.D."/>
            <person name="Gurjal M."/>
            <person name="Hansen N.F."/>
            <person name="Hayashizaki Y."/>
            <person name="Johnson-Hopson C."/>
            <person name="Hsuan V.W."/>
            <person name="Iida K."/>
            <person name="Karnes M."/>
            <person name="Khan S."/>
            <person name="Koesema E."/>
            <person name="Ishida J."/>
            <person name="Jiang P.X."/>
            <person name="Jones T."/>
            <person name="Kawai J."/>
            <person name="Kamiya A."/>
            <person name="Meyers C."/>
            <person name="Nakajima M."/>
            <person name="Narusaka M."/>
            <person name="Seki M."/>
            <person name="Sakurai T."/>
            <person name="Satou M."/>
            <person name="Tamse R."/>
            <person name="Vaysberg M."/>
            <person name="Wallender E.K."/>
            <person name="Wong C."/>
            <person name="Yamamura Y."/>
            <person name="Yuan S."/>
            <person name="Shinozaki K."/>
            <person name="Davis R.W."/>
            <person name="Theologis A."/>
            <person name="Ecker J.R."/>
        </authorList>
    </citation>
    <scope>NUCLEOTIDE SEQUENCE [LARGE SCALE MRNA]</scope>
    <source>
        <strain>cv. Columbia</strain>
    </source>
</reference>
<reference key="5">
    <citation type="submission" date="2005-03" db="EMBL/GenBank/DDBJ databases">
        <title>Large-scale analysis of RIKEN Arabidopsis full-length (RAFL) cDNAs.</title>
        <authorList>
            <person name="Totoki Y."/>
            <person name="Seki M."/>
            <person name="Ishida J."/>
            <person name="Nakajima M."/>
            <person name="Enju A."/>
            <person name="Kamiya A."/>
            <person name="Narusaka M."/>
            <person name="Shin-i T."/>
            <person name="Nakagawa M."/>
            <person name="Sakamoto N."/>
            <person name="Oishi K."/>
            <person name="Kohara Y."/>
            <person name="Kobayashi M."/>
            <person name="Toyoda A."/>
            <person name="Sakaki Y."/>
            <person name="Sakurai T."/>
            <person name="Iida K."/>
            <person name="Akiyama K."/>
            <person name="Satou M."/>
            <person name="Toyoda T."/>
            <person name="Konagaya A."/>
            <person name="Carninci P."/>
            <person name="Kawai J."/>
            <person name="Hayashizaki Y."/>
            <person name="Shinozaki K."/>
        </authorList>
    </citation>
    <scope>NUCLEOTIDE SEQUENCE [LARGE SCALE MRNA] OF 643-891</scope>
    <source>
        <strain>cv. Columbia</strain>
    </source>
</reference>
<reference key="6">
    <citation type="journal article" date="2005" name="Plant Cell">
        <title>The RPN1 subunit of the 26S proteasome in Arabidopsis is essential for embryogenesis.</title>
        <authorList>
            <person name="Brukhin V."/>
            <person name="Gheyselinck J."/>
            <person name="Gagliardini V."/>
            <person name="Genschik P."/>
            <person name="Grossniklaus U."/>
        </authorList>
    </citation>
    <scope>DISRUPTION PHENOTYPE</scope>
    <scope>FUNCTION</scope>
    <scope>TISSUE SPECIFICITY</scope>
    <scope>DEVELOPMENTAL STAGE</scope>
</reference>
<reference key="7">
    <citation type="journal article" date="2009" name="Plant Cell Physiol.">
        <title>The Arabidopsis 26S proteasome subunit RPN1a is required for optimal plant growth and stress responses.</title>
        <authorList>
            <person name="Wang S."/>
            <person name="Kurepa J."/>
            <person name="Smalle J.A."/>
        </authorList>
    </citation>
    <scope>DISRUPTION PHENOTYPE</scope>
    <scope>FUNCTION</scope>
</reference>
<reference key="8">
    <citation type="journal article" date="2010" name="J. Biol. Chem.">
        <title>Affinity purification of the Arabidopsis 26 S proteasome reveals a diverse array of plant proteolytic complexes.</title>
        <authorList>
            <person name="Book A.J."/>
            <person name="Gladman N.P."/>
            <person name="Lee S.S."/>
            <person name="Scalf M."/>
            <person name="Smith L.M."/>
            <person name="Vierstra R.D."/>
        </authorList>
    </citation>
    <scope>IDENTIFICATION BY MASS SPECTROMETRY</scope>
    <scope>CHARACTERIZATION OF THE 26S PROTEASOME COMPLEX</scope>
    <scope>SUBUNIT</scope>
    <scope>ACETYLATION AT THR-219</scope>
    <scope>UBIQUITINATION AT LYS-218</scope>
</reference>
<reference key="9">
    <citation type="journal article" date="2012" name="Plant J.">
        <title>RPN1a, a 26S proteasome subunit, is required for innate immunity in Arabidopsis.</title>
        <authorList>
            <person name="Yao C."/>
            <person name="Wu Y."/>
            <person name="Nie H."/>
            <person name="Tang D."/>
        </authorList>
    </citation>
    <scope>FUNCTION</scope>
    <scope>DISRUPTION PHENOTYPE</scope>
    <scope>SUBCELLULAR LOCATION</scope>
    <scope>INDUCTION BY SALICYLIC ACID</scope>
</reference>
<reference key="10">
    <citation type="journal article" date="2021" name="New Phytol.">
        <title>JMJ27-mediated histone H3K9 demethylation positively regulates drought-stress responses in Arabidopsis.</title>
        <authorList>
            <person name="Wang Q."/>
            <person name="Liu P."/>
            <person name="Jing H."/>
            <person name="Zhou X.F."/>
            <person name="Zhao B."/>
            <person name="Li Y."/>
            <person name="Jin J.B."/>
        </authorList>
    </citation>
    <scope>FUNCTION</scope>
    <scope>INTERACTION WITH JMJ27</scope>
    <scope>REPRESSION BY DROUGHT</scope>
    <source>
        <strain>cv. Columbia</strain>
    </source>
</reference>
<organism>
    <name type="scientific">Arabidopsis thaliana</name>
    <name type="common">Mouse-ear cress</name>
    <dbReference type="NCBI Taxonomy" id="3702"/>
    <lineage>
        <taxon>Eukaryota</taxon>
        <taxon>Viridiplantae</taxon>
        <taxon>Streptophyta</taxon>
        <taxon>Embryophyta</taxon>
        <taxon>Tracheophyta</taxon>
        <taxon>Spermatophyta</taxon>
        <taxon>Magnoliopsida</taxon>
        <taxon>eudicotyledons</taxon>
        <taxon>Gunneridae</taxon>
        <taxon>Pentapetalae</taxon>
        <taxon>rosids</taxon>
        <taxon>malvids</taxon>
        <taxon>Brassicales</taxon>
        <taxon>Brassicaceae</taxon>
        <taxon>Camelineae</taxon>
        <taxon>Arabidopsis</taxon>
    </lineage>
</organism>
<keyword id="KW-0007">Acetylation</keyword>
<keyword id="KW-0963">Cytoplasm</keyword>
<keyword id="KW-0391">Immunity</keyword>
<keyword id="KW-0399">Innate immunity</keyword>
<keyword id="KW-1017">Isopeptide bond</keyword>
<keyword id="KW-0539">Nucleus</keyword>
<keyword id="KW-0647">Proteasome</keyword>
<keyword id="KW-1185">Reference proteome</keyword>
<keyword id="KW-0677">Repeat</keyword>
<keyword id="KW-0832">Ubl conjugation</keyword>
<protein>
    <recommendedName>
        <fullName evidence="11">26S proteasome non-ATPase regulatory subunit 2 homolog A</fullName>
    </recommendedName>
    <alternativeName>
        <fullName evidence="11">26S proteasome regulatory subunit RPN1a</fullName>
        <shortName evidence="11">AtRPN1a</shortName>
    </alternativeName>
    <alternativeName>
        <fullName evidence="11">26S proteasome regulatory subunit S2 homolog A</fullName>
    </alternativeName>
</protein>
<feature type="chain" id="PRO_0000399921" description="26S proteasome non-ATPase regulatory subunit 2 homolog A">
    <location>
        <begin position="1"/>
        <end position="891"/>
    </location>
</feature>
<feature type="repeat" description="PC 1" evidence="2">
    <location>
        <begin position="414"/>
        <end position="447"/>
    </location>
</feature>
<feature type="repeat" description="PC 2" evidence="2">
    <location>
        <begin position="448"/>
        <end position="484"/>
    </location>
</feature>
<feature type="repeat" description="PC 3" evidence="2">
    <location>
        <begin position="485"/>
        <end position="519"/>
    </location>
</feature>
<feature type="repeat" description="PC 4" evidence="2">
    <location>
        <begin position="522"/>
        <end position="556"/>
    </location>
</feature>
<feature type="repeat" description="PC 5" evidence="2">
    <location>
        <begin position="565"/>
        <end position="594"/>
    </location>
</feature>
<feature type="repeat" description="PC 6" evidence="2">
    <location>
        <begin position="674"/>
        <end position="705"/>
    </location>
</feature>
<feature type="repeat" description="PC 7" evidence="2">
    <location>
        <begin position="724"/>
        <end position="739"/>
    </location>
</feature>
<feature type="region of interest" description="Disordered" evidence="4">
    <location>
        <begin position="1"/>
        <end position="44"/>
    </location>
</feature>
<feature type="short sequence motif" description="Nuclear localization signal" evidence="3">
    <location>
        <begin position="14"/>
        <end position="21"/>
    </location>
</feature>
<feature type="compositionally biased region" description="Basic and acidic residues" evidence="4">
    <location>
        <begin position="14"/>
        <end position="37"/>
    </location>
</feature>
<feature type="modified residue" description="O-acetylthreonine" evidence="8">
    <location>
        <position position="219"/>
    </location>
</feature>
<feature type="cross-link" description="Glycyl lysine isopeptide (Lys-Gly) (interchain with G-Cter in ubiquitin)" evidence="8">
    <location>
        <position position="218"/>
    </location>
</feature>